<reference key="1">
    <citation type="journal article" date="2008" name="J. Bacteriol.">
        <title>Comparative genome sequence analysis of multidrug-resistant Acinetobacter baumannii.</title>
        <authorList>
            <person name="Adams M.D."/>
            <person name="Goglin K."/>
            <person name="Molyneaux N."/>
            <person name="Hujer K.M."/>
            <person name="Lavender H."/>
            <person name="Jamison J.J."/>
            <person name="MacDonald I.J."/>
            <person name="Martin K.M."/>
            <person name="Russo T."/>
            <person name="Campagnari A.A."/>
            <person name="Hujer A.M."/>
            <person name="Bonomo R.A."/>
            <person name="Gill S.R."/>
        </authorList>
    </citation>
    <scope>NUCLEOTIDE SEQUENCE [LARGE SCALE GENOMIC DNA]</scope>
    <source>
        <strain>AB0057</strain>
    </source>
</reference>
<protein>
    <recommendedName>
        <fullName evidence="1">ATP synthase subunit alpha</fullName>
        <ecNumber evidence="1">7.1.2.2</ecNumber>
    </recommendedName>
    <alternativeName>
        <fullName evidence="1">ATP synthase F1 sector subunit alpha</fullName>
    </alternativeName>
    <alternativeName>
        <fullName evidence="1">F-ATPase subunit alpha</fullName>
    </alternativeName>
</protein>
<evidence type="ECO:0000255" key="1">
    <source>
        <dbReference type="HAMAP-Rule" id="MF_01346"/>
    </source>
</evidence>
<organism>
    <name type="scientific">Acinetobacter baumannii (strain AB0057)</name>
    <dbReference type="NCBI Taxonomy" id="480119"/>
    <lineage>
        <taxon>Bacteria</taxon>
        <taxon>Pseudomonadati</taxon>
        <taxon>Pseudomonadota</taxon>
        <taxon>Gammaproteobacteria</taxon>
        <taxon>Moraxellales</taxon>
        <taxon>Moraxellaceae</taxon>
        <taxon>Acinetobacter</taxon>
        <taxon>Acinetobacter calcoaceticus/baumannii complex</taxon>
    </lineage>
</organism>
<feature type="chain" id="PRO_1000143330" description="ATP synthase subunit alpha">
    <location>
        <begin position="1"/>
        <end position="514"/>
    </location>
</feature>
<feature type="binding site" evidence="1">
    <location>
        <begin position="170"/>
        <end position="177"/>
    </location>
    <ligand>
        <name>ATP</name>
        <dbReference type="ChEBI" id="CHEBI:30616"/>
    </ligand>
</feature>
<feature type="site" description="Required for activity" evidence="1">
    <location>
        <position position="374"/>
    </location>
</feature>
<name>ATPA_ACIB5</name>
<comment type="function">
    <text evidence="1">Produces ATP from ADP in the presence of a proton gradient across the membrane. The alpha chain is a regulatory subunit.</text>
</comment>
<comment type="catalytic activity">
    <reaction evidence="1">
        <text>ATP + H2O + 4 H(+)(in) = ADP + phosphate + 5 H(+)(out)</text>
        <dbReference type="Rhea" id="RHEA:57720"/>
        <dbReference type="ChEBI" id="CHEBI:15377"/>
        <dbReference type="ChEBI" id="CHEBI:15378"/>
        <dbReference type="ChEBI" id="CHEBI:30616"/>
        <dbReference type="ChEBI" id="CHEBI:43474"/>
        <dbReference type="ChEBI" id="CHEBI:456216"/>
        <dbReference type="EC" id="7.1.2.2"/>
    </reaction>
</comment>
<comment type="subunit">
    <text evidence="1">F-type ATPases have 2 components, CF(1) - the catalytic core - and CF(0) - the membrane proton channel. CF(1) has five subunits: alpha(3), beta(3), gamma(1), delta(1), epsilon(1). CF(0) has three main subunits: a(1), b(2) and c(9-12). The alpha and beta chains form an alternating ring which encloses part of the gamma chain. CF(1) is attached to CF(0) by a central stalk formed by the gamma and epsilon chains, while a peripheral stalk is formed by the delta and b chains.</text>
</comment>
<comment type="subcellular location">
    <subcellularLocation>
        <location evidence="1">Cell inner membrane</location>
        <topology evidence="1">Peripheral membrane protein</topology>
    </subcellularLocation>
</comment>
<comment type="similarity">
    <text evidence="1">Belongs to the ATPase alpha/beta chains family.</text>
</comment>
<keyword id="KW-0066">ATP synthesis</keyword>
<keyword id="KW-0067">ATP-binding</keyword>
<keyword id="KW-0997">Cell inner membrane</keyword>
<keyword id="KW-1003">Cell membrane</keyword>
<keyword id="KW-0139">CF(1)</keyword>
<keyword id="KW-0375">Hydrogen ion transport</keyword>
<keyword id="KW-0406">Ion transport</keyword>
<keyword id="KW-0472">Membrane</keyword>
<keyword id="KW-0547">Nucleotide-binding</keyword>
<keyword id="KW-1278">Translocase</keyword>
<keyword id="KW-0813">Transport</keyword>
<sequence length="514" mass="55397">MQQLNPSEISALIKQRIGDLDTSATAKNEGTIVMVSDGIVRIHGLADAMYGEMIEFDGGLFGMALNLEQDSVGAVVLGNYLSLQEGQKARCTGRVLEVPVGPELLGRVVDALGNPIDGKGPIDAKLTDAVEKVAPGVIWRQSVDQPVQTGYKSVDTMIPVGRGQRELIIGDRQTGKTAMAIDAIIAQKNSGIKCVYVAIGQKQSTIANVVRKLEETGAMAYTTVVAAAAADPAAMQYLAPYSGCTMGEYFRDRGEDALIIYDDLSKQAVAYRQISLLLRRPPGREAYPGDVFYLHSRLLERASRVSAEYVEKFTNGAVTGKTGSLTALPIIETQAGDVSAFVPTNVISITDGQIFLETSLFNAGIRPAVNAGISVSRVGGSAQTKIIKKLSGGIRTALAQYRELAAFAQFASDLDEATRKQLEHGQRVTELMKQKQYAPYSIADQAVSVYASNEGYMADVEVKKIVDFDAALIAYFRSEYAPLMKQIDETGDYNKDIEAAIKAGIESFKATQTY</sequence>
<accession>B7I1W2</accession>
<dbReference type="EC" id="7.1.2.2" evidence="1"/>
<dbReference type="EMBL" id="CP001182">
    <property type="protein sequence ID" value="ACJ39622.1"/>
    <property type="molecule type" value="Genomic_DNA"/>
</dbReference>
<dbReference type="RefSeq" id="WP_001186635.1">
    <property type="nucleotide sequence ID" value="NC_011586.2"/>
</dbReference>
<dbReference type="SMR" id="B7I1W2"/>
<dbReference type="GeneID" id="92892165"/>
<dbReference type="KEGG" id="abn:AB57_0191"/>
<dbReference type="HOGENOM" id="CLU_010091_2_1_6"/>
<dbReference type="Proteomes" id="UP000007094">
    <property type="component" value="Chromosome"/>
</dbReference>
<dbReference type="GO" id="GO:0005886">
    <property type="term" value="C:plasma membrane"/>
    <property type="evidence" value="ECO:0007669"/>
    <property type="project" value="UniProtKB-SubCell"/>
</dbReference>
<dbReference type="GO" id="GO:0045259">
    <property type="term" value="C:proton-transporting ATP synthase complex"/>
    <property type="evidence" value="ECO:0007669"/>
    <property type="project" value="UniProtKB-KW"/>
</dbReference>
<dbReference type="GO" id="GO:0043531">
    <property type="term" value="F:ADP binding"/>
    <property type="evidence" value="ECO:0007669"/>
    <property type="project" value="TreeGrafter"/>
</dbReference>
<dbReference type="GO" id="GO:0005524">
    <property type="term" value="F:ATP binding"/>
    <property type="evidence" value="ECO:0007669"/>
    <property type="project" value="UniProtKB-UniRule"/>
</dbReference>
<dbReference type="GO" id="GO:0046933">
    <property type="term" value="F:proton-transporting ATP synthase activity, rotational mechanism"/>
    <property type="evidence" value="ECO:0007669"/>
    <property type="project" value="UniProtKB-UniRule"/>
</dbReference>
<dbReference type="CDD" id="cd18113">
    <property type="entry name" value="ATP-synt_F1_alpha_C"/>
    <property type="match status" value="1"/>
</dbReference>
<dbReference type="CDD" id="cd18116">
    <property type="entry name" value="ATP-synt_F1_alpha_N"/>
    <property type="match status" value="1"/>
</dbReference>
<dbReference type="CDD" id="cd01132">
    <property type="entry name" value="F1-ATPase_alpha_CD"/>
    <property type="match status" value="1"/>
</dbReference>
<dbReference type="FunFam" id="1.20.150.20:FF:000001">
    <property type="entry name" value="ATP synthase subunit alpha"/>
    <property type="match status" value="1"/>
</dbReference>
<dbReference type="FunFam" id="2.40.30.20:FF:000001">
    <property type="entry name" value="ATP synthase subunit alpha"/>
    <property type="match status" value="1"/>
</dbReference>
<dbReference type="FunFam" id="3.40.50.300:FF:000002">
    <property type="entry name" value="ATP synthase subunit alpha"/>
    <property type="match status" value="1"/>
</dbReference>
<dbReference type="Gene3D" id="2.40.30.20">
    <property type="match status" value="1"/>
</dbReference>
<dbReference type="Gene3D" id="1.20.150.20">
    <property type="entry name" value="ATP synthase alpha/beta chain, C-terminal domain"/>
    <property type="match status" value="1"/>
</dbReference>
<dbReference type="Gene3D" id="3.40.50.300">
    <property type="entry name" value="P-loop containing nucleotide triphosphate hydrolases"/>
    <property type="match status" value="1"/>
</dbReference>
<dbReference type="HAMAP" id="MF_01346">
    <property type="entry name" value="ATP_synth_alpha_bact"/>
    <property type="match status" value="1"/>
</dbReference>
<dbReference type="InterPro" id="IPR023366">
    <property type="entry name" value="ATP_synth_asu-like_sf"/>
</dbReference>
<dbReference type="InterPro" id="IPR000793">
    <property type="entry name" value="ATP_synth_asu_C"/>
</dbReference>
<dbReference type="InterPro" id="IPR038376">
    <property type="entry name" value="ATP_synth_asu_C_sf"/>
</dbReference>
<dbReference type="InterPro" id="IPR033732">
    <property type="entry name" value="ATP_synth_F1_a_nt-bd_dom"/>
</dbReference>
<dbReference type="InterPro" id="IPR005294">
    <property type="entry name" value="ATP_synth_F1_asu"/>
</dbReference>
<dbReference type="InterPro" id="IPR020003">
    <property type="entry name" value="ATPase_a/bsu_AS"/>
</dbReference>
<dbReference type="InterPro" id="IPR004100">
    <property type="entry name" value="ATPase_F1/V1/A1_a/bsu_N"/>
</dbReference>
<dbReference type="InterPro" id="IPR036121">
    <property type="entry name" value="ATPase_F1/V1/A1_a/bsu_N_sf"/>
</dbReference>
<dbReference type="InterPro" id="IPR000194">
    <property type="entry name" value="ATPase_F1/V1/A1_a/bsu_nucl-bd"/>
</dbReference>
<dbReference type="InterPro" id="IPR027417">
    <property type="entry name" value="P-loop_NTPase"/>
</dbReference>
<dbReference type="NCBIfam" id="TIGR00962">
    <property type="entry name" value="atpA"/>
    <property type="match status" value="1"/>
</dbReference>
<dbReference type="NCBIfam" id="NF009884">
    <property type="entry name" value="PRK13343.1"/>
    <property type="match status" value="1"/>
</dbReference>
<dbReference type="PANTHER" id="PTHR48082">
    <property type="entry name" value="ATP SYNTHASE SUBUNIT ALPHA, MITOCHONDRIAL"/>
    <property type="match status" value="1"/>
</dbReference>
<dbReference type="PANTHER" id="PTHR48082:SF2">
    <property type="entry name" value="ATP SYNTHASE SUBUNIT ALPHA, MITOCHONDRIAL"/>
    <property type="match status" value="1"/>
</dbReference>
<dbReference type="Pfam" id="PF00006">
    <property type="entry name" value="ATP-synt_ab"/>
    <property type="match status" value="1"/>
</dbReference>
<dbReference type="Pfam" id="PF00306">
    <property type="entry name" value="ATP-synt_ab_C"/>
    <property type="match status" value="1"/>
</dbReference>
<dbReference type="Pfam" id="PF02874">
    <property type="entry name" value="ATP-synt_ab_N"/>
    <property type="match status" value="1"/>
</dbReference>
<dbReference type="SUPFAM" id="SSF47917">
    <property type="entry name" value="C-terminal domain of alpha and beta subunits of F1 ATP synthase"/>
    <property type="match status" value="1"/>
</dbReference>
<dbReference type="SUPFAM" id="SSF50615">
    <property type="entry name" value="N-terminal domain of alpha and beta subunits of F1 ATP synthase"/>
    <property type="match status" value="1"/>
</dbReference>
<dbReference type="SUPFAM" id="SSF52540">
    <property type="entry name" value="P-loop containing nucleoside triphosphate hydrolases"/>
    <property type="match status" value="1"/>
</dbReference>
<dbReference type="PROSITE" id="PS00152">
    <property type="entry name" value="ATPASE_ALPHA_BETA"/>
    <property type="match status" value="1"/>
</dbReference>
<gene>
    <name evidence="1" type="primary">atpA</name>
    <name type="ordered locus">AB57_0191</name>
</gene>
<proteinExistence type="inferred from homology"/>